<proteinExistence type="inferred from homology"/>
<reference key="1">
    <citation type="submission" date="2008-10" db="EMBL/GenBank/DDBJ databases">
        <title>The complete genome sequence of Helicobacter pylori strain P12.</title>
        <authorList>
            <person name="Fischer W."/>
            <person name="Windhager L."/>
            <person name="Karnholz A."/>
            <person name="Zeiller M."/>
            <person name="Zimmer R."/>
            <person name="Haas R."/>
        </authorList>
    </citation>
    <scope>NUCLEOTIDE SEQUENCE [LARGE SCALE GENOMIC DNA]</scope>
    <source>
        <strain>P12</strain>
    </source>
</reference>
<protein>
    <recommendedName>
        <fullName evidence="1">7-cyano-7-deazaguanine synthase</fullName>
        <ecNumber evidence="1">6.3.4.20</ecNumber>
    </recommendedName>
    <alternativeName>
        <fullName evidence="1">7-cyano-7-carbaguanine synthase</fullName>
    </alternativeName>
    <alternativeName>
        <fullName evidence="1">PreQ(0) synthase</fullName>
    </alternativeName>
    <alternativeName>
        <fullName evidence="1">Queuosine biosynthesis protein QueC</fullName>
    </alternativeName>
</protein>
<sequence>MEQEICVISFSGGQDSTTLAVWAKKRFKKVCLVGFDYAQKHSVELECAQKIASLLQLPYEIISLDFLENITRSALFKNSNDLMGHSHAQNKDLPNSFVPNRNAIFITLLHSYAQKIGASNIALGVSQADFSGYPDCKEDFIKSIEHALNLGSNTAIKILTPLMFLNKAQEFQMAKDLGVLDLVIKETHTCYQGERRILHAYGYGCGECPACQLRKKGYEEFQAKALFQ</sequence>
<name>QUEC_HELP2</name>
<evidence type="ECO:0000255" key="1">
    <source>
        <dbReference type="HAMAP-Rule" id="MF_01633"/>
    </source>
</evidence>
<gene>
    <name evidence="1" type="primary">queC</name>
    <name type="ordered locus">HPP12_0651</name>
</gene>
<accession>B6JLM6</accession>
<feature type="chain" id="PRO_1000186604" description="7-cyano-7-deazaguanine synthase">
    <location>
        <begin position="1"/>
        <end position="228"/>
    </location>
</feature>
<feature type="binding site" evidence="1">
    <location>
        <begin position="10"/>
        <end position="20"/>
    </location>
    <ligand>
        <name>ATP</name>
        <dbReference type="ChEBI" id="CHEBI:30616"/>
    </ligand>
</feature>
<feature type="binding site" evidence="1">
    <location>
        <position position="190"/>
    </location>
    <ligand>
        <name>Zn(2+)</name>
        <dbReference type="ChEBI" id="CHEBI:29105"/>
    </ligand>
</feature>
<feature type="binding site" evidence="1">
    <location>
        <position position="205"/>
    </location>
    <ligand>
        <name>Zn(2+)</name>
        <dbReference type="ChEBI" id="CHEBI:29105"/>
    </ligand>
</feature>
<feature type="binding site" evidence="1">
    <location>
        <position position="208"/>
    </location>
    <ligand>
        <name>Zn(2+)</name>
        <dbReference type="ChEBI" id="CHEBI:29105"/>
    </ligand>
</feature>
<feature type="binding site" evidence="1">
    <location>
        <position position="211"/>
    </location>
    <ligand>
        <name>Zn(2+)</name>
        <dbReference type="ChEBI" id="CHEBI:29105"/>
    </ligand>
</feature>
<organism>
    <name type="scientific">Helicobacter pylori (strain P12)</name>
    <dbReference type="NCBI Taxonomy" id="570508"/>
    <lineage>
        <taxon>Bacteria</taxon>
        <taxon>Pseudomonadati</taxon>
        <taxon>Campylobacterota</taxon>
        <taxon>Epsilonproteobacteria</taxon>
        <taxon>Campylobacterales</taxon>
        <taxon>Helicobacteraceae</taxon>
        <taxon>Helicobacter</taxon>
    </lineage>
</organism>
<comment type="function">
    <text evidence="1">Catalyzes the ATP-dependent conversion of 7-carboxy-7-deazaguanine (CDG) to 7-cyano-7-deazaguanine (preQ(0)).</text>
</comment>
<comment type="catalytic activity">
    <reaction evidence="1">
        <text>7-carboxy-7-deazaguanine + NH4(+) + ATP = 7-cyano-7-deazaguanine + ADP + phosphate + H2O + H(+)</text>
        <dbReference type="Rhea" id="RHEA:27982"/>
        <dbReference type="ChEBI" id="CHEBI:15377"/>
        <dbReference type="ChEBI" id="CHEBI:15378"/>
        <dbReference type="ChEBI" id="CHEBI:28938"/>
        <dbReference type="ChEBI" id="CHEBI:30616"/>
        <dbReference type="ChEBI" id="CHEBI:43474"/>
        <dbReference type="ChEBI" id="CHEBI:45075"/>
        <dbReference type="ChEBI" id="CHEBI:61036"/>
        <dbReference type="ChEBI" id="CHEBI:456216"/>
        <dbReference type="EC" id="6.3.4.20"/>
    </reaction>
</comment>
<comment type="cofactor">
    <cofactor evidence="1">
        <name>Zn(2+)</name>
        <dbReference type="ChEBI" id="CHEBI:29105"/>
    </cofactor>
    <text evidence="1">Binds 1 zinc ion per subunit.</text>
</comment>
<comment type="pathway">
    <text evidence="1">Purine metabolism; 7-cyano-7-deazaguanine biosynthesis.</text>
</comment>
<comment type="similarity">
    <text evidence="1">Belongs to the QueC family.</text>
</comment>
<dbReference type="EC" id="6.3.4.20" evidence="1"/>
<dbReference type="EMBL" id="CP001217">
    <property type="protein sequence ID" value="ACJ07804.1"/>
    <property type="molecule type" value="Genomic_DNA"/>
</dbReference>
<dbReference type="SMR" id="B6JLM6"/>
<dbReference type="KEGG" id="hpp:HPP12_0651"/>
<dbReference type="HOGENOM" id="CLU_081854_0_0_7"/>
<dbReference type="UniPathway" id="UPA00391"/>
<dbReference type="Proteomes" id="UP000008198">
    <property type="component" value="Chromosome"/>
</dbReference>
<dbReference type="GO" id="GO:0005524">
    <property type="term" value="F:ATP binding"/>
    <property type="evidence" value="ECO:0007669"/>
    <property type="project" value="UniProtKB-UniRule"/>
</dbReference>
<dbReference type="GO" id="GO:0016879">
    <property type="term" value="F:ligase activity, forming carbon-nitrogen bonds"/>
    <property type="evidence" value="ECO:0007669"/>
    <property type="project" value="UniProtKB-UniRule"/>
</dbReference>
<dbReference type="GO" id="GO:0008270">
    <property type="term" value="F:zinc ion binding"/>
    <property type="evidence" value="ECO:0007669"/>
    <property type="project" value="UniProtKB-UniRule"/>
</dbReference>
<dbReference type="GO" id="GO:0008616">
    <property type="term" value="P:queuosine biosynthetic process"/>
    <property type="evidence" value="ECO:0007669"/>
    <property type="project" value="UniProtKB-UniRule"/>
</dbReference>
<dbReference type="CDD" id="cd01995">
    <property type="entry name" value="QueC-like"/>
    <property type="match status" value="1"/>
</dbReference>
<dbReference type="FunFam" id="3.40.50.620:FF:000179">
    <property type="entry name" value="7-cyano-7-deazaguanine synthase"/>
    <property type="match status" value="1"/>
</dbReference>
<dbReference type="Gene3D" id="3.40.50.620">
    <property type="entry name" value="HUPs"/>
    <property type="match status" value="1"/>
</dbReference>
<dbReference type="HAMAP" id="MF_01633">
    <property type="entry name" value="QueC"/>
    <property type="match status" value="1"/>
</dbReference>
<dbReference type="InterPro" id="IPR018317">
    <property type="entry name" value="QueC"/>
</dbReference>
<dbReference type="InterPro" id="IPR014729">
    <property type="entry name" value="Rossmann-like_a/b/a_fold"/>
</dbReference>
<dbReference type="NCBIfam" id="TIGR00364">
    <property type="entry name" value="7-cyano-7-deazaguanine synthase QueC"/>
    <property type="match status" value="1"/>
</dbReference>
<dbReference type="PANTHER" id="PTHR42914">
    <property type="entry name" value="7-CYANO-7-DEAZAGUANINE SYNTHASE"/>
    <property type="match status" value="1"/>
</dbReference>
<dbReference type="PANTHER" id="PTHR42914:SF1">
    <property type="entry name" value="7-CYANO-7-DEAZAGUANINE SYNTHASE"/>
    <property type="match status" value="1"/>
</dbReference>
<dbReference type="Pfam" id="PF06508">
    <property type="entry name" value="QueC"/>
    <property type="match status" value="1"/>
</dbReference>
<dbReference type="PIRSF" id="PIRSF006293">
    <property type="entry name" value="ExsB"/>
    <property type="match status" value="1"/>
</dbReference>
<dbReference type="SUPFAM" id="SSF52402">
    <property type="entry name" value="Adenine nucleotide alpha hydrolases-like"/>
    <property type="match status" value="1"/>
</dbReference>
<keyword id="KW-0067">ATP-binding</keyword>
<keyword id="KW-0436">Ligase</keyword>
<keyword id="KW-0479">Metal-binding</keyword>
<keyword id="KW-0547">Nucleotide-binding</keyword>
<keyword id="KW-0671">Queuosine biosynthesis</keyword>
<keyword id="KW-0862">Zinc</keyword>